<feature type="chain" id="PRO_0000255951" description="Ensconsin">
    <location>
        <begin position="1"/>
        <end position="725"/>
    </location>
</feature>
<feature type="region of interest" description="Disordered" evidence="3">
    <location>
        <begin position="1"/>
        <end position="73"/>
    </location>
</feature>
<feature type="region of interest" description="Disordered" evidence="3">
    <location>
        <begin position="86"/>
        <end position="163"/>
    </location>
</feature>
<feature type="region of interest" description="Disordered" evidence="3">
    <location>
        <begin position="261"/>
        <end position="539"/>
    </location>
</feature>
<feature type="region of interest" description="Disordered" evidence="3">
    <location>
        <begin position="575"/>
        <end position="631"/>
    </location>
</feature>
<feature type="coiled-coil region" evidence="2">
    <location>
        <begin position="71"/>
        <end position="131"/>
    </location>
</feature>
<feature type="compositionally biased region" description="Basic and acidic residues" evidence="3">
    <location>
        <begin position="15"/>
        <end position="26"/>
    </location>
</feature>
<feature type="compositionally biased region" description="Basic and acidic residues" evidence="3">
    <location>
        <begin position="36"/>
        <end position="73"/>
    </location>
</feature>
<feature type="compositionally biased region" description="Basic and acidic residues" evidence="3">
    <location>
        <begin position="86"/>
        <end position="133"/>
    </location>
</feature>
<feature type="compositionally biased region" description="Basic and acidic residues" evidence="3">
    <location>
        <begin position="271"/>
        <end position="282"/>
    </location>
</feature>
<feature type="compositionally biased region" description="Polar residues" evidence="3">
    <location>
        <begin position="324"/>
        <end position="341"/>
    </location>
</feature>
<feature type="compositionally biased region" description="Basic and acidic residues" evidence="3">
    <location>
        <begin position="351"/>
        <end position="380"/>
    </location>
</feature>
<feature type="compositionally biased region" description="Polar residues" evidence="3">
    <location>
        <begin position="381"/>
        <end position="392"/>
    </location>
</feature>
<feature type="compositionally biased region" description="Pro residues" evidence="3">
    <location>
        <begin position="408"/>
        <end position="422"/>
    </location>
</feature>
<feature type="compositionally biased region" description="Basic and acidic residues" evidence="3">
    <location>
        <begin position="434"/>
        <end position="539"/>
    </location>
</feature>
<feature type="compositionally biased region" description="Basic and acidic residues" evidence="3">
    <location>
        <begin position="575"/>
        <end position="584"/>
    </location>
</feature>
<feature type="compositionally biased region" description="Polar residues" evidence="3">
    <location>
        <begin position="585"/>
        <end position="598"/>
    </location>
</feature>
<protein>
    <recommendedName>
        <fullName>Ensconsin</fullName>
    </recommendedName>
    <alternativeName>
        <fullName>Microtubule-associated protein 7</fullName>
        <shortName>MAP-7</shortName>
    </alternativeName>
</protein>
<evidence type="ECO:0000250" key="1"/>
<evidence type="ECO:0000255" key="2"/>
<evidence type="ECO:0000256" key="3">
    <source>
        <dbReference type="SAM" id="MobiDB-lite"/>
    </source>
</evidence>
<evidence type="ECO:0000305" key="4"/>
<gene>
    <name type="primary">MAP7</name>
    <name type="ORF">RCJMB04_28m17</name>
</gene>
<comment type="function">
    <text>Microtubule-stabilizing protein that may play an important role during reorganization of microtubules during polarization and differentiation of epithelial cells.</text>
</comment>
<comment type="subcellular location">
    <subcellularLocation>
        <location evidence="1">Cytoplasm</location>
        <location evidence="1">Perinuclear region</location>
    </subcellularLocation>
    <subcellularLocation>
        <location evidence="1">Cytoplasm</location>
        <location evidence="1">Cytoskeleton</location>
    </subcellularLocation>
</comment>
<comment type="similarity">
    <text evidence="4">Belongs to the MAP7 family.</text>
</comment>
<reference key="1">
    <citation type="journal article" date="2005" name="Genome Biol.">
        <title>Full-length cDNAs from chicken bursal lymphocytes to facilitate gene function analysis.</title>
        <authorList>
            <person name="Caldwell R.B."/>
            <person name="Kierzek A.M."/>
            <person name="Arakawa H."/>
            <person name="Bezzubov Y."/>
            <person name="Zaim J."/>
            <person name="Fiedler P."/>
            <person name="Kutter S."/>
            <person name="Blagodatski A."/>
            <person name="Kostovska D."/>
            <person name="Koter M."/>
            <person name="Plachy J."/>
            <person name="Carninci P."/>
            <person name="Hayashizaki Y."/>
            <person name="Buerstedde J.-M."/>
        </authorList>
    </citation>
    <scope>NUCLEOTIDE SEQUENCE [LARGE SCALE MRNA]</scope>
    <source>
        <strain>CB</strain>
        <tissue>Bursa of Fabricius</tissue>
    </source>
</reference>
<dbReference type="EMBL" id="AJ720882">
    <property type="protein sequence ID" value="CAG32541.1"/>
    <property type="molecule type" value="mRNA"/>
</dbReference>
<dbReference type="RefSeq" id="NP_001026243.1">
    <property type="nucleotide sequence ID" value="NM_001031072.1"/>
</dbReference>
<dbReference type="SMR" id="Q5ZIA2"/>
<dbReference type="FunCoup" id="Q5ZIA2">
    <property type="interactions" value="151"/>
</dbReference>
<dbReference type="STRING" id="9031.ENSGALP00000055379"/>
<dbReference type="PaxDb" id="9031-ENSGALP00000022497"/>
<dbReference type="GeneID" id="421689"/>
<dbReference type="KEGG" id="gga:421689"/>
<dbReference type="CTD" id="9053"/>
<dbReference type="VEuPathDB" id="HostDB:geneid_421689"/>
<dbReference type="eggNOG" id="ENOG502QTDQ">
    <property type="taxonomic scope" value="Eukaryota"/>
</dbReference>
<dbReference type="InParanoid" id="Q5ZIA2"/>
<dbReference type="OrthoDB" id="8948920at2759"/>
<dbReference type="PhylomeDB" id="Q5ZIA2"/>
<dbReference type="PRO" id="PR:Q5ZIA2"/>
<dbReference type="Proteomes" id="UP000000539">
    <property type="component" value="Unassembled WGS sequence"/>
</dbReference>
<dbReference type="GO" id="GO:0005874">
    <property type="term" value="C:microtubule"/>
    <property type="evidence" value="ECO:0007669"/>
    <property type="project" value="UniProtKB-KW"/>
</dbReference>
<dbReference type="GO" id="GO:0015630">
    <property type="term" value="C:microtubule cytoskeleton"/>
    <property type="evidence" value="ECO:0000318"/>
    <property type="project" value="GO_Central"/>
</dbReference>
<dbReference type="GO" id="GO:0048471">
    <property type="term" value="C:perinuclear region of cytoplasm"/>
    <property type="evidence" value="ECO:0007669"/>
    <property type="project" value="UniProtKB-SubCell"/>
</dbReference>
<dbReference type="GO" id="GO:0000226">
    <property type="term" value="P:microtubule cytoskeleton organization"/>
    <property type="evidence" value="ECO:0000318"/>
    <property type="project" value="GO_Central"/>
</dbReference>
<dbReference type="InterPro" id="IPR051483">
    <property type="entry name" value="MAP7_domain-containing"/>
</dbReference>
<dbReference type="InterPro" id="IPR008604">
    <property type="entry name" value="MAP7_fam"/>
</dbReference>
<dbReference type="PANTHER" id="PTHR15073:SF4">
    <property type="entry name" value="ENSCONSIN"/>
    <property type="match status" value="1"/>
</dbReference>
<dbReference type="PANTHER" id="PTHR15073">
    <property type="entry name" value="MICROTUBULE-ASSOCIATED PROTEIN"/>
    <property type="match status" value="1"/>
</dbReference>
<dbReference type="Pfam" id="PF05672">
    <property type="entry name" value="MAP7"/>
    <property type="match status" value="1"/>
</dbReference>
<sequence length="725" mass="82313">MAEAAGRSGGRRRRAAEGSKTQDKKVASGQSNTGTKPDHPPILKVDDRQRLARERREEREKQLAARETVWLEREERARQHYEKHLEERKKKLEEQRLKEEGRRAAVEEKRRQRIEEDKERHEAVVRRTIERSQKPKQKQNRWSWGGALHSRINNSDPDRRSVSTMNLSKHVDPVINKRLSSSSATLLNSSDRARRLQLSPWESSIVSRLLTPTHSFLARSKSTAALSGDAASCSPISPLSYKTMSCRNSADRAKLFASTDAVGRRRTHLAGTDKKEKERDHLSSNFSANLKGGHFSSNPKARSPAPSPVWHASKSLPSLAGTLKQITSPPGSSKVPSTQARPPSPGNIRPVKKDTKPENEKKRAEKEAEKANEERTEGSKETSAGTGESANQEELAVQAEDAQAASPSLPPAPPALSPPPAPMKTSAGTTDPEEATRLLSEKRRLAREQREREEQERREREELERQKKEELSQRIAEERARREEEEARRQEAERKRKDAEEEREKEERLRRQAEEREQKEREEMERIQKQKEEEARLREEAERIRLEREKHFQREEQERLERKKRLEEIMKRTRRVEAVDKKPNDQQNGHISKANNTGEAVITSPAPPMEPSGGPQLQHATQSPHSGKPVTCTHTIVSHQPPMNMDSNLNPEKNTEENGMSMQNDNFEEIINLPIGSKPSRLDALNNDGSDSPGIPLNPILAFEDKGTLLPQVDSVQTHQTAEVI</sequence>
<keyword id="KW-0175">Coiled coil</keyword>
<keyword id="KW-0963">Cytoplasm</keyword>
<keyword id="KW-0206">Cytoskeleton</keyword>
<keyword id="KW-0493">Microtubule</keyword>
<keyword id="KW-1185">Reference proteome</keyword>
<name>MAP7_CHICK</name>
<accession>Q5ZIA2</accession>
<organism>
    <name type="scientific">Gallus gallus</name>
    <name type="common">Chicken</name>
    <dbReference type="NCBI Taxonomy" id="9031"/>
    <lineage>
        <taxon>Eukaryota</taxon>
        <taxon>Metazoa</taxon>
        <taxon>Chordata</taxon>
        <taxon>Craniata</taxon>
        <taxon>Vertebrata</taxon>
        <taxon>Euteleostomi</taxon>
        <taxon>Archelosauria</taxon>
        <taxon>Archosauria</taxon>
        <taxon>Dinosauria</taxon>
        <taxon>Saurischia</taxon>
        <taxon>Theropoda</taxon>
        <taxon>Coelurosauria</taxon>
        <taxon>Aves</taxon>
        <taxon>Neognathae</taxon>
        <taxon>Galloanserae</taxon>
        <taxon>Galliformes</taxon>
        <taxon>Phasianidae</taxon>
        <taxon>Phasianinae</taxon>
        <taxon>Gallus</taxon>
    </lineage>
</organism>
<proteinExistence type="evidence at transcript level"/>